<evidence type="ECO:0000255" key="1">
    <source>
        <dbReference type="PROSITE-ProRule" id="PRU00625"/>
    </source>
</evidence>
<evidence type="ECO:0000256" key="2">
    <source>
        <dbReference type="SAM" id="MobiDB-lite"/>
    </source>
</evidence>
<evidence type="ECO:0000269" key="3">
    <source>
    </source>
</evidence>
<evidence type="ECO:0007829" key="4">
    <source>
        <dbReference type="PDB" id="5EYB"/>
    </source>
</evidence>
<reference key="1">
    <citation type="journal article" date="1997" name="Nucleic Acids Res.">
        <title>Molecular cloning and analysis of Schizosaccharomyces pombe Reb1p: sequence-specific recognition of two sites in the far upstream rDNA intergenic spacer.</title>
        <authorList>
            <person name="Zhao A."/>
            <person name="Guo A."/>
            <person name="Liu Z."/>
            <person name="Pape L."/>
        </authorList>
    </citation>
    <scope>NUCLEOTIDE SEQUENCE [GENOMIC DNA]</scope>
    <scope>FUNCTION</scope>
</reference>
<reference key="2">
    <citation type="journal article" date="2002" name="Nature">
        <title>The genome sequence of Schizosaccharomyces pombe.</title>
        <authorList>
            <person name="Wood V."/>
            <person name="Gwilliam R."/>
            <person name="Rajandream M.A."/>
            <person name="Lyne M.H."/>
            <person name="Lyne R."/>
            <person name="Stewart A."/>
            <person name="Sgouros J.G."/>
            <person name="Peat N."/>
            <person name="Hayles J."/>
            <person name="Baker S.G."/>
            <person name="Basham D."/>
            <person name="Bowman S."/>
            <person name="Brooks K."/>
            <person name="Brown D."/>
            <person name="Brown S."/>
            <person name="Chillingworth T."/>
            <person name="Churcher C.M."/>
            <person name="Collins M."/>
            <person name="Connor R."/>
            <person name="Cronin A."/>
            <person name="Davis P."/>
            <person name="Feltwell T."/>
            <person name="Fraser A."/>
            <person name="Gentles S."/>
            <person name="Goble A."/>
            <person name="Hamlin N."/>
            <person name="Harris D.E."/>
            <person name="Hidalgo J."/>
            <person name="Hodgson G."/>
            <person name="Holroyd S."/>
            <person name="Hornsby T."/>
            <person name="Howarth S."/>
            <person name="Huckle E.J."/>
            <person name="Hunt S."/>
            <person name="Jagels K."/>
            <person name="James K.D."/>
            <person name="Jones L."/>
            <person name="Jones M."/>
            <person name="Leather S."/>
            <person name="McDonald S."/>
            <person name="McLean J."/>
            <person name="Mooney P."/>
            <person name="Moule S."/>
            <person name="Mungall K.L."/>
            <person name="Murphy L.D."/>
            <person name="Niblett D."/>
            <person name="Odell C."/>
            <person name="Oliver K."/>
            <person name="O'Neil S."/>
            <person name="Pearson D."/>
            <person name="Quail M.A."/>
            <person name="Rabbinowitsch E."/>
            <person name="Rutherford K.M."/>
            <person name="Rutter S."/>
            <person name="Saunders D."/>
            <person name="Seeger K."/>
            <person name="Sharp S."/>
            <person name="Skelton J."/>
            <person name="Simmonds M.N."/>
            <person name="Squares R."/>
            <person name="Squares S."/>
            <person name="Stevens K."/>
            <person name="Taylor K."/>
            <person name="Taylor R.G."/>
            <person name="Tivey A."/>
            <person name="Walsh S.V."/>
            <person name="Warren T."/>
            <person name="Whitehead S."/>
            <person name="Woodward J.R."/>
            <person name="Volckaert G."/>
            <person name="Aert R."/>
            <person name="Robben J."/>
            <person name="Grymonprez B."/>
            <person name="Weltjens I."/>
            <person name="Vanstreels E."/>
            <person name="Rieger M."/>
            <person name="Schaefer M."/>
            <person name="Mueller-Auer S."/>
            <person name="Gabel C."/>
            <person name="Fuchs M."/>
            <person name="Duesterhoeft A."/>
            <person name="Fritzc C."/>
            <person name="Holzer E."/>
            <person name="Moestl D."/>
            <person name="Hilbert H."/>
            <person name="Borzym K."/>
            <person name="Langer I."/>
            <person name="Beck A."/>
            <person name="Lehrach H."/>
            <person name="Reinhardt R."/>
            <person name="Pohl T.M."/>
            <person name="Eger P."/>
            <person name="Zimmermann W."/>
            <person name="Wedler H."/>
            <person name="Wambutt R."/>
            <person name="Purnelle B."/>
            <person name="Goffeau A."/>
            <person name="Cadieu E."/>
            <person name="Dreano S."/>
            <person name="Gloux S."/>
            <person name="Lelaure V."/>
            <person name="Mottier S."/>
            <person name="Galibert F."/>
            <person name="Aves S.J."/>
            <person name="Xiang Z."/>
            <person name="Hunt C."/>
            <person name="Moore K."/>
            <person name="Hurst S.M."/>
            <person name="Lucas M."/>
            <person name="Rochet M."/>
            <person name="Gaillardin C."/>
            <person name="Tallada V.A."/>
            <person name="Garzon A."/>
            <person name="Thode G."/>
            <person name="Daga R.R."/>
            <person name="Cruzado L."/>
            <person name="Jimenez J."/>
            <person name="Sanchez M."/>
            <person name="del Rey F."/>
            <person name="Benito J."/>
            <person name="Dominguez A."/>
            <person name="Revuelta J.L."/>
            <person name="Moreno S."/>
            <person name="Armstrong J."/>
            <person name="Forsburg S.L."/>
            <person name="Cerutti L."/>
            <person name="Lowe T."/>
            <person name="McCombie W.R."/>
            <person name="Paulsen I."/>
            <person name="Potashkin J."/>
            <person name="Shpakovski G.V."/>
            <person name="Ussery D."/>
            <person name="Barrell B.G."/>
            <person name="Nurse P."/>
        </authorList>
    </citation>
    <scope>NUCLEOTIDE SEQUENCE [LARGE SCALE GENOMIC DNA]</scope>
    <source>
        <strain>972 / ATCC 24843</strain>
    </source>
</reference>
<gene>
    <name type="primary">reb1</name>
    <name type="ORF">SPBC1198.11c</name>
    <name type="ORF">SPBC660.01c</name>
</gene>
<sequence>MDTSVLNPELQIHGFIGVDSLQSSRKRKNDFDDFPLNKGLKTNNNDYSGSIEPKFSPALSIKEDGKNDRNFEALMSLQAQDSNLSEQNTSIHLDALASSSIALGNDNVDSSAFLSKVNKGVNAMRNSTSNQTNDSILISPSEITNMDPFLKGSARWTAEHWDYLERRMQNFCQTYSLDHTQVADSLHEKRLHGPLSSLVKLLVQEMPSFTRRTILRHLRALYNIPGYEKYSRKNSSGRGDFGVQETAIISQEVHNFIMDQGWSEYQFCNQIWAGKCPKTIRMFYSNLYKKLSHRDAKSIYHHVRRAYNPFEDRCVWSKEEDEELRKNVVEHGKCWTKIGRKMARMPNDCRDRWRDVVRFGDKLKRNAWSLEEETQLLQIVAELRNREDLSSDINWTLVAQMLGTRTRLQCRYKFQQLTKAASKFELQENVWLLERIYDSLLNNGGKIHWENIVKEANGRWTRDQMLFQFINLKKMIPSYDNLPLLEATKSAIDDFKVVLSGFSN</sequence>
<organism>
    <name type="scientific">Schizosaccharomyces pombe (strain 972 / ATCC 24843)</name>
    <name type="common">Fission yeast</name>
    <dbReference type="NCBI Taxonomy" id="284812"/>
    <lineage>
        <taxon>Eukaryota</taxon>
        <taxon>Fungi</taxon>
        <taxon>Dikarya</taxon>
        <taxon>Ascomycota</taxon>
        <taxon>Taphrinomycotina</taxon>
        <taxon>Schizosaccharomycetes</taxon>
        <taxon>Schizosaccharomycetales</taxon>
        <taxon>Schizosaccharomycetaceae</taxon>
        <taxon>Schizosaccharomyces</taxon>
    </lineage>
</organism>
<comment type="function">
    <text evidence="3">DNA-binding protein that recognizes sites within both the enhancer and the promoter of rRNA transcription, as well as upstream of many genes transcribed by RNA polymerase II. Has a role in the termination of RNA polymerase I catalyzed transcription.</text>
</comment>
<comment type="subcellular location">
    <subcellularLocation>
        <location evidence="1">Nucleus</location>
    </subcellularLocation>
</comment>
<dbReference type="EMBL" id="U33010">
    <property type="status" value="NOT_ANNOTATED_CDS"/>
    <property type="molecule type" value="Genomic_DNA"/>
</dbReference>
<dbReference type="EMBL" id="CU329671">
    <property type="protein sequence ID" value="CAB91186.1"/>
    <property type="molecule type" value="Genomic_DNA"/>
</dbReference>
<dbReference type="PIR" id="T40613">
    <property type="entry name" value="T40613"/>
</dbReference>
<dbReference type="RefSeq" id="NP_595080.1">
    <property type="nucleotide sequence ID" value="NM_001020986.2"/>
</dbReference>
<dbReference type="PDB" id="5EYB">
    <property type="method" value="X-ray"/>
    <property type="resolution" value="2.70 A"/>
    <property type="chains" value="A/B=146-504"/>
</dbReference>
<dbReference type="PDBsum" id="5EYB"/>
<dbReference type="SMR" id="Q9P6H9"/>
<dbReference type="BioGRID" id="276474">
    <property type="interactions" value="225"/>
</dbReference>
<dbReference type="FunCoup" id="Q9P6H9">
    <property type="interactions" value="268"/>
</dbReference>
<dbReference type="IntAct" id="Q9P6H9">
    <property type="interactions" value="1"/>
</dbReference>
<dbReference type="STRING" id="284812.Q9P6H9"/>
<dbReference type="iPTMnet" id="Q9P6H9"/>
<dbReference type="PaxDb" id="4896-SPBC1198.11c.1"/>
<dbReference type="EnsemblFungi" id="SPBC1198.11c.1">
    <property type="protein sequence ID" value="SPBC1198.11c.1:pep"/>
    <property type="gene ID" value="SPBC1198.11c"/>
</dbReference>
<dbReference type="PomBase" id="SPBC1198.11c">
    <property type="gene designation" value="reb1"/>
</dbReference>
<dbReference type="VEuPathDB" id="FungiDB:SPBC1198.11c"/>
<dbReference type="eggNOG" id="KOG0051">
    <property type="taxonomic scope" value="Eukaryota"/>
</dbReference>
<dbReference type="HOGENOM" id="CLU_538797_0_0_1"/>
<dbReference type="InParanoid" id="Q9P6H9"/>
<dbReference type="OMA" id="MARMPND"/>
<dbReference type="PhylomeDB" id="Q9P6H9"/>
<dbReference type="PRO" id="PR:Q9P6H9"/>
<dbReference type="Proteomes" id="UP000002485">
    <property type="component" value="Chromosome II"/>
</dbReference>
<dbReference type="GO" id="GO:0140602">
    <property type="term" value="C:nucleolar peripheral inclusion body"/>
    <property type="evidence" value="ECO:0000314"/>
    <property type="project" value="PomBase"/>
</dbReference>
<dbReference type="GO" id="GO:0005634">
    <property type="term" value="C:nucleus"/>
    <property type="evidence" value="ECO:0000318"/>
    <property type="project" value="GO_Central"/>
</dbReference>
<dbReference type="GO" id="GO:0033553">
    <property type="term" value="C:rDNA heterochromatin"/>
    <property type="evidence" value="ECO:0000269"/>
    <property type="project" value="PomBase"/>
</dbReference>
<dbReference type="GO" id="GO:0001228">
    <property type="term" value="F:DNA-binding transcription activator activity, RNA polymerase II-specific"/>
    <property type="evidence" value="ECO:0000315"/>
    <property type="project" value="PomBase"/>
</dbReference>
<dbReference type="GO" id="GO:0003700">
    <property type="term" value="F:DNA-binding transcription factor activity"/>
    <property type="evidence" value="ECO:0000318"/>
    <property type="project" value="GO_Central"/>
</dbReference>
<dbReference type="GO" id="GO:0043110">
    <property type="term" value="F:rDNA spacer replication fork barrier binding"/>
    <property type="evidence" value="ECO:0000315"/>
    <property type="project" value="PomBase"/>
</dbReference>
<dbReference type="GO" id="GO:0110035">
    <property type="term" value="F:rDNA spacer replication fork barrier binding, bending"/>
    <property type="evidence" value="ECO:0000314"/>
    <property type="project" value="PomBase"/>
</dbReference>
<dbReference type="GO" id="GO:0000978">
    <property type="term" value="F:RNA polymerase II cis-regulatory region sequence-specific DNA binding"/>
    <property type="evidence" value="ECO:0000314"/>
    <property type="project" value="PomBase"/>
</dbReference>
<dbReference type="GO" id="GO:0043565">
    <property type="term" value="F:sequence-specific DNA binding"/>
    <property type="evidence" value="ECO:0000314"/>
    <property type="project" value="PomBase"/>
</dbReference>
<dbReference type="GO" id="GO:0000976">
    <property type="term" value="F:transcription cis-regulatory region binding"/>
    <property type="evidence" value="ECO:0000318"/>
    <property type="project" value="GO_Central"/>
</dbReference>
<dbReference type="GO" id="GO:0001147">
    <property type="term" value="F:transcription termination site sequence-specific DNA binding"/>
    <property type="evidence" value="ECO:0000314"/>
    <property type="project" value="PomBase"/>
</dbReference>
<dbReference type="GO" id="GO:0071946">
    <property type="term" value="P:cis-acting DNA replication termination"/>
    <property type="evidence" value="ECO:0000314"/>
    <property type="project" value="PomBase"/>
</dbReference>
<dbReference type="GO" id="GO:0045944">
    <property type="term" value="P:positive regulation of transcription by RNA polymerase II"/>
    <property type="evidence" value="ECO:0000315"/>
    <property type="project" value="PomBase"/>
</dbReference>
<dbReference type="GO" id="GO:0006355">
    <property type="term" value="P:regulation of DNA-templated transcription"/>
    <property type="evidence" value="ECO:0000318"/>
    <property type="project" value="GO_Central"/>
</dbReference>
<dbReference type="GO" id="GO:0043111">
    <property type="term" value="P:replication fork arrest"/>
    <property type="evidence" value="ECO:0000315"/>
    <property type="project" value="PomBase"/>
</dbReference>
<dbReference type="GO" id="GO:0031582">
    <property type="term" value="P:replication fork arrest at rDNA repeats"/>
    <property type="evidence" value="ECO:0000315"/>
    <property type="project" value="PomBase"/>
</dbReference>
<dbReference type="GO" id="GO:0071807">
    <property type="term" value="P:replication fork arrest involved in DNA replication termination"/>
    <property type="evidence" value="ECO:0000315"/>
    <property type="project" value="PomBase"/>
</dbReference>
<dbReference type="GO" id="GO:0006363">
    <property type="term" value="P:termination of RNA polymerase I transcription"/>
    <property type="evidence" value="ECO:0000314"/>
    <property type="project" value="PomBase"/>
</dbReference>
<dbReference type="CDD" id="cd00167">
    <property type="entry name" value="SANT"/>
    <property type="match status" value="2"/>
</dbReference>
<dbReference type="Gene3D" id="1.10.10.60">
    <property type="entry name" value="Homeodomain-like"/>
    <property type="match status" value="2"/>
</dbReference>
<dbReference type="InterPro" id="IPR051651">
    <property type="entry name" value="DMTF1_DNA-bind_reg"/>
</dbReference>
<dbReference type="InterPro" id="IPR009057">
    <property type="entry name" value="Homeodomain-like_sf"/>
</dbReference>
<dbReference type="InterPro" id="IPR017930">
    <property type="entry name" value="Myb_dom"/>
</dbReference>
<dbReference type="InterPro" id="IPR049260">
    <property type="entry name" value="REB1_MybAD"/>
</dbReference>
<dbReference type="InterPro" id="IPR001005">
    <property type="entry name" value="SANT/Myb"/>
</dbReference>
<dbReference type="PANTHER" id="PTHR46380">
    <property type="entry name" value="CYCLIN-D-BINDING MYB-LIKE TRANSCRIPTION FACTOR 1"/>
    <property type="match status" value="1"/>
</dbReference>
<dbReference type="PANTHER" id="PTHR46380:SF5">
    <property type="entry name" value="DNA-BINDING PROTEIN REB1"/>
    <property type="match status" value="1"/>
</dbReference>
<dbReference type="Pfam" id="PF00249">
    <property type="entry name" value="Myb_DNA-binding"/>
    <property type="match status" value="2"/>
</dbReference>
<dbReference type="Pfam" id="PF21559">
    <property type="entry name" value="Reb1_MybAD"/>
    <property type="match status" value="2"/>
</dbReference>
<dbReference type="SMART" id="SM00717">
    <property type="entry name" value="SANT"/>
    <property type="match status" value="2"/>
</dbReference>
<dbReference type="SUPFAM" id="SSF46689">
    <property type="entry name" value="Homeodomain-like"/>
    <property type="match status" value="2"/>
</dbReference>
<dbReference type="PROSITE" id="PS51294">
    <property type="entry name" value="HTH_MYB"/>
    <property type="match status" value="2"/>
</dbReference>
<feature type="chain" id="PRO_0000197088" description="DNA-binding protein reb1">
    <location>
        <begin position="1"/>
        <end position="504"/>
    </location>
</feature>
<feature type="domain" description="HTH myb-type 1" evidence="1">
    <location>
        <begin position="308"/>
        <end position="361"/>
    </location>
</feature>
<feature type="domain" description="HTH myb-type 2" evidence="1">
    <location>
        <begin position="362"/>
        <end position="422"/>
    </location>
</feature>
<feature type="DNA-binding region" description="H-T-H motif" evidence="1">
    <location>
        <begin position="335"/>
        <end position="357"/>
    </location>
</feature>
<feature type="DNA-binding region" description="H-T-H motif" evidence="1">
    <location>
        <begin position="395"/>
        <end position="418"/>
    </location>
</feature>
<feature type="region of interest" description="Disordered" evidence="2">
    <location>
        <begin position="30"/>
        <end position="51"/>
    </location>
</feature>
<feature type="helix" evidence="4">
    <location>
        <begin position="158"/>
        <end position="174"/>
    </location>
</feature>
<feature type="helix" evidence="4">
    <location>
        <begin position="179"/>
        <end position="185"/>
    </location>
</feature>
<feature type="strand" evidence="4">
    <location>
        <begin position="188"/>
        <end position="190"/>
    </location>
</feature>
<feature type="helix" evidence="4">
    <location>
        <begin position="193"/>
        <end position="205"/>
    </location>
</feature>
<feature type="helix" evidence="4">
    <location>
        <begin position="211"/>
        <end position="221"/>
    </location>
</feature>
<feature type="helix" evidence="4">
    <location>
        <begin position="228"/>
        <end position="230"/>
    </location>
</feature>
<feature type="strand" evidence="4">
    <location>
        <begin position="237"/>
        <end position="240"/>
    </location>
</feature>
<feature type="helix" evidence="4">
    <location>
        <begin position="243"/>
        <end position="258"/>
    </location>
</feature>
<feature type="helix" evidence="4">
    <location>
        <begin position="259"/>
        <end position="261"/>
    </location>
</feature>
<feature type="helix" evidence="4">
    <location>
        <begin position="264"/>
        <end position="271"/>
    </location>
</feature>
<feature type="strand" evidence="4">
    <location>
        <begin position="273"/>
        <end position="275"/>
    </location>
</feature>
<feature type="helix" evidence="4">
    <location>
        <begin position="278"/>
        <end position="289"/>
    </location>
</feature>
<feature type="turn" evidence="4">
    <location>
        <begin position="290"/>
        <end position="293"/>
    </location>
</feature>
<feature type="helix" evidence="4">
    <location>
        <begin position="296"/>
        <end position="306"/>
    </location>
</feature>
<feature type="helix" evidence="4">
    <location>
        <begin position="318"/>
        <end position="331"/>
    </location>
</feature>
<feature type="helix" evidence="4">
    <location>
        <begin position="335"/>
        <end position="341"/>
    </location>
</feature>
<feature type="helix" evidence="4">
    <location>
        <begin position="346"/>
        <end position="355"/>
    </location>
</feature>
<feature type="helix" evidence="4">
    <location>
        <begin position="357"/>
        <end position="359"/>
    </location>
</feature>
<feature type="helix" evidence="4">
    <location>
        <begin position="370"/>
        <end position="380"/>
    </location>
</feature>
<feature type="helix" evidence="4">
    <location>
        <begin position="395"/>
        <end position="402"/>
    </location>
</feature>
<feature type="helix" evidence="4">
    <location>
        <begin position="407"/>
        <end position="417"/>
    </location>
</feature>
<feature type="helix" evidence="4">
    <location>
        <begin position="426"/>
        <end position="441"/>
    </location>
</feature>
<feature type="strand" evidence="4">
    <location>
        <begin position="443"/>
        <end position="446"/>
    </location>
</feature>
<feature type="helix" evidence="4">
    <location>
        <begin position="449"/>
        <end position="456"/>
    </location>
</feature>
<feature type="helix" evidence="4">
    <location>
        <begin position="462"/>
        <end position="475"/>
    </location>
</feature>
<feature type="helix" evidence="4">
    <location>
        <begin position="478"/>
        <end position="481"/>
    </location>
</feature>
<feature type="helix" evidence="4">
    <location>
        <begin position="484"/>
        <end position="498"/>
    </location>
</feature>
<proteinExistence type="evidence at protein level"/>
<keyword id="KW-0002">3D-structure</keyword>
<keyword id="KW-0238">DNA-binding</keyword>
<keyword id="KW-0539">Nucleus</keyword>
<keyword id="KW-1185">Reference proteome</keyword>
<keyword id="KW-0677">Repeat</keyword>
<keyword id="KW-0804">Transcription</keyword>
<keyword id="KW-0805">Transcription regulation</keyword>
<name>REB1_SCHPO</name>
<protein>
    <recommendedName>
        <fullName>DNA-binding protein reb1</fullName>
    </recommendedName>
</protein>
<accession>Q9P6H9</accession>
<accession>O94422</accession>